<keyword id="KW-0067">ATP-binding</keyword>
<keyword id="KW-0143">Chaperone</keyword>
<keyword id="KW-0547">Nucleotide-binding</keyword>
<keyword id="KW-0346">Stress response</keyword>
<evidence type="ECO:0000255" key="1">
    <source>
        <dbReference type="HAMAP-Rule" id="MF_00679"/>
    </source>
</evidence>
<reference key="1">
    <citation type="journal article" date="2007" name="Genes Dev.">
        <title>New insights into Acinetobacter baumannii pathogenesis revealed by high-density pyrosequencing and transposon mutagenesis.</title>
        <authorList>
            <person name="Smith M.G."/>
            <person name="Gianoulis T.A."/>
            <person name="Pukatzki S."/>
            <person name="Mekalanos J.J."/>
            <person name="Ornston L.N."/>
            <person name="Gerstein M."/>
            <person name="Snyder M."/>
        </authorList>
    </citation>
    <scope>NUCLEOTIDE SEQUENCE [LARGE SCALE GENOMIC DNA]</scope>
    <source>
        <strain>ATCC 17978 / DSM 105126 / CIP 53.77 / LMG 1025 / NCDC KC755 / 5377</strain>
    </source>
</reference>
<accession>A3M561</accession>
<organism>
    <name type="scientific">Acinetobacter baumannii (strain ATCC 17978 / DSM 105126 / CIP 53.77 / LMG 1025 / NCDC KC755 / 5377)</name>
    <dbReference type="NCBI Taxonomy" id="400667"/>
    <lineage>
        <taxon>Bacteria</taxon>
        <taxon>Pseudomonadati</taxon>
        <taxon>Pseudomonadota</taxon>
        <taxon>Gammaproteobacteria</taxon>
        <taxon>Moraxellales</taxon>
        <taxon>Moraxellaceae</taxon>
        <taxon>Acinetobacter</taxon>
        <taxon>Acinetobacter calcoaceticus/baumannii complex</taxon>
    </lineage>
</organism>
<comment type="function">
    <text evidence="1">Chaperone involved in the maturation of iron-sulfur cluster-containing proteins. Has a low intrinsic ATPase activity which is markedly stimulated by HscB.</text>
</comment>
<comment type="similarity">
    <text evidence="1">Belongs to the heat shock protein 70 family.</text>
</comment>
<name>HSCA_ACIBT</name>
<protein>
    <recommendedName>
        <fullName evidence="1">Chaperone protein HscA homolog</fullName>
    </recommendedName>
</protein>
<sequence>MALLQIAEPGQSSAPHQHRIAIGIDLGTTHSLVATVLSGKPKVLNDVQNRRLLPSIVHYGDNTTHYGEEAKPFIIADPKNTIVSVKRFMGRSKADIKFQHPYELVGSENEMPAFETRAGRKTPVEISAEILKQLKARAEDSLQNPVNGAVITVPAYFDEAQRQATRDAAQLAGLNVLRLLNEPTAAAVAYGLDQESNLATDRNYVIYDLGGGTFDVSILRFSQGVFEVLATGGHTALGGDDLDRLIVKWAKKQLNIDVLSDEDYAVFIVAARQAKEQLSTQDSVELKLLEATLTLDRPTFESIIQVALDKTISVCKRVLRDAKLELTDIQNVVLVGGSTRSYAVQKAVREVFAQEPLCTINPDEVVAIGASITANQLIGNSQDGSLLLDVTPLSLGLETMGGLVERLISRNTAIPVARRQEFTTYQDGQTAMLIHVVQGERDLVEHCRSLGRFVLHGIPPMTAGQARIEVTFQVDADGLLTVSAREATSGVQAHIDIKPSYGLSEADTERLLIEGFQHAEEDKNLRHLKETKVEAERELEALEQALKVDADLLDEKQLEALNSAKGSLKAQLEGSDIQAIEQAVQQLKVHSDAFAALRMNRHIDHALKGTKLDDWSKSN</sequence>
<dbReference type="EMBL" id="CP000521">
    <property type="protein sequence ID" value="ABO12055.2"/>
    <property type="molecule type" value="Genomic_DNA"/>
</dbReference>
<dbReference type="RefSeq" id="WP_001196570.1">
    <property type="nucleotide sequence ID" value="NZ_CP053098.1"/>
</dbReference>
<dbReference type="SMR" id="A3M561"/>
<dbReference type="KEGG" id="acb:A1S_1628"/>
<dbReference type="HOGENOM" id="CLU_005965_2_3_6"/>
<dbReference type="GO" id="GO:0005524">
    <property type="term" value="F:ATP binding"/>
    <property type="evidence" value="ECO:0007669"/>
    <property type="project" value="UniProtKB-KW"/>
</dbReference>
<dbReference type="GO" id="GO:0016887">
    <property type="term" value="F:ATP hydrolysis activity"/>
    <property type="evidence" value="ECO:0007669"/>
    <property type="project" value="UniProtKB-UniRule"/>
</dbReference>
<dbReference type="GO" id="GO:0140662">
    <property type="term" value="F:ATP-dependent protein folding chaperone"/>
    <property type="evidence" value="ECO:0007669"/>
    <property type="project" value="InterPro"/>
</dbReference>
<dbReference type="GO" id="GO:0051082">
    <property type="term" value="F:unfolded protein binding"/>
    <property type="evidence" value="ECO:0007669"/>
    <property type="project" value="InterPro"/>
</dbReference>
<dbReference type="GO" id="GO:0016226">
    <property type="term" value="P:iron-sulfur cluster assembly"/>
    <property type="evidence" value="ECO:0007669"/>
    <property type="project" value="InterPro"/>
</dbReference>
<dbReference type="CDD" id="cd10236">
    <property type="entry name" value="ASKHA_NBD_HSP70_HscA"/>
    <property type="match status" value="1"/>
</dbReference>
<dbReference type="FunFam" id="3.30.420.40:FF:000046">
    <property type="entry name" value="Chaperone protein HscA"/>
    <property type="match status" value="1"/>
</dbReference>
<dbReference type="Gene3D" id="1.20.1270.10">
    <property type="match status" value="1"/>
</dbReference>
<dbReference type="Gene3D" id="3.30.420.40">
    <property type="match status" value="2"/>
</dbReference>
<dbReference type="Gene3D" id="3.90.640.10">
    <property type="entry name" value="Actin, Chain A, domain 4"/>
    <property type="match status" value="1"/>
</dbReference>
<dbReference type="Gene3D" id="2.60.34.10">
    <property type="entry name" value="Substrate Binding Domain Of DNAk, Chain A, domain 1"/>
    <property type="match status" value="1"/>
</dbReference>
<dbReference type="HAMAP" id="MF_00679">
    <property type="entry name" value="HscA"/>
    <property type="match status" value="1"/>
</dbReference>
<dbReference type="InterPro" id="IPR043129">
    <property type="entry name" value="ATPase_NBD"/>
</dbReference>
<dbReference type="InterPro" id="IPR018181">
    <property type="entry name" value="Heat_shock_70_CS"/>
</dbReference>
<dbReference type="InterPro" id="IPR042039">
    <property type="entry name" value="HscA_NBD"/>
</dbReference>
<dbReference type="InterPro" id="IPR029048">
    <property type="entry name" value="HSP70_C_sf"/>
</dbReference>
<dbReference type="InterPro" id="IPR029047">
    <property type="entry name" value="HSP70_peptide-bd_sf"/>
</dbReference>
<dbReference type="InterPro" id="IPR013126">
    <property type="entry name" value="Hsp_70_fam"/>
</dbReference>
<dbReference type="InterPro" id="IPR010236">
    <property type="entry name" value="ISC_FeS_clus_asmbl_HscA"/>
</dbReference>
<dbReference type="NCBIfam" id="TIGR01991">
    <property type="entry name" value="HscA"/>
    <property type="match status" value="1"/>
</dbReference>
<dbReference type="NCBIfam" id="NF003520">
    <property type="entry name" value="PRK05183.1"/>
    <property type="match status" value="1"/>
</dbReference>
<dbReference type="PANTHER" id="PTHR19375">
    <property type="entry name" value="HEAT SHOCK PROTEIN 70KDA"/>
    <property type="match status" value="1"/>
</dbReference>
<dbReference type="Pfam" id="PF00012">
    <property type="entry name" value="HSP70"/>
    <property type="match status" value="1"/>
</dbReference>
<dbReference type="PRINTS" id="PR00301">
    <property type="entry name" value="HEATSHOCK70"/>
</dbReference>
<dbReference type="SUPFAM" id="SSF53067">
    <property type="entry name" value="Actin-like ATPase domain"/>
    <property type="match status" value="2"/>
</dbReference>
<dbReference type="SUPFAM" id="SSF100934">
    <property type="entry name" value="Heat shock protein 70kD (HSP70), C-terminal subdomain"/>
    <property type="match status" value="1"/>
</dbReference>
<dbReference type="SUPFAM" id="SSF100920">
    <property type="entry name" value="Heat shock protein 70kD (HSP70), peptide-binding domain"/>
    <property type="match status" value="1"/>
</dbReference>
<dbReference type="PROSITE" id="PS00297">
    <property type="entry name" value="HSP70_1"/>
    <property type="match status" value="1"/>
</dbReference>
<dbReference type="PROSITE" id="PS00329">
    <property type="entry name" value="HSP70_2"/>
    <property type="match status" value="1"/>
</dbReference>
<feature type="chain" id="PRO_1000131658" description="Chaperone protein HscA homolog">
    <location>
        <begin position="1"/>
        <end position="619"/>
    </location>
</feature>
<proteinExistence type="inferred from homology"/>
<gene>
    <name evidence="1" type="primary">hscA</name>
    <name type="ordered locus">A1S_1628</name>
</gene>